<keyword id="KW-0963">Cytoplasm</keyword>
<keyword id="KW-0269">Exonuclease</keyword>
<keyword id="KW-0378">Hydrolase</keyword>
<keyword id="KW-0540">Nuclease</keyword>
<evidence type="ECO:0000255" key="1">
    <source>
        <dbReference type="HAMAP-Rule" id="MF_00378"/>
    </source>
</evidence>
<evidence type="ECO:0000256" key="2">
    <source>
        <dbReference type="SAM" id="MobiDB-lite"/>
    </source>
</evidence>
<gene>
    <name evidence="1" type="primary">xseA</name>
    <name type="ordered locus">CMS2416</name>
</gene>
<reference key="1">
    <citation type="journal article" date="2008" name="J. Bacteriol.">
        <title>Genome of the actinomycete plant pathogen Clavibacter michiganensis subsp. sepedonicus suggests recent niche adaptation.</title>
        <authorList>
            <person name="Bentley S.D."/>
            <person name="Corton C."/>
            <person name="Brown S.E."/>
            <person name="Barron A."/>
            <person name="Clark L."/>
            <person name="Doggett J."/>
            <person name="Harris B."/>
            <person name="Ormond D."/>
            <person name="Quail M.A."/>
            <person name="May G."/>
            <person name="Francis D."/>
            <person name="Knudson D."/>
            <person name="Parkhill J."/>
            <person name="Ishimaru C.A."/>
        </authorList>
    </citation>
    <scope>NUCLEOTIDE SEQUENCE [LARGE SCALE GENOMIC DNA]</scope>
    <source>
        <strain>ATCC 33113 / DSM 20744 / JCM 9667 / LMG 2889 / ICMP 2535 / C-1</strain>
    </source>
</reference>
<organism>
    <name type="scientific">Clavibacter sepedonicus</name>
    <name type="common">Clavibacter michiganensis subsp. sepedonicus</name>
    <dbReference type="NCBI Taxonomy" id="31964"/>
    <lineage>
        <taxon>Bacteria</taxon>
        <taxon>Bacillati</taxon>
        <taxon>Actinomycetota</taxon>
        <taxon>Actinomycetes</taxon>
        <taxon>Micrococcales</taxon>
        <taxon>Microbacteriaceae</taxon>
        <taxon>Clavibacter</taxon>
    </lineage>
</organism>
<name>EX7L_CLASE</name>
<sequence>MSETRTVSMPAADAPTVDAPWPVSVLSGKIKGWIDRLGTAWVEGEITQWGGSGGNVYGKLKDLDVDATISFTVWSSVRAKIPADLGQGARVVALVKPNYWVKGGTLTMQVLEMRHVGLGDLLERLERLRQTLRAEGLFDADRKRRLPFLPGCIGLITGKDSDAEKDVLRNAQLHWPSVRFRVVHTAVQGDRAAGEVTRAIGVLDEDPEVDVIVIARGGGDFQNLLVFSDEKLVRTAAACRTPLVSAIGHEADRPLLDDVADLRASTPTDAAKRVVPDVSEELSRVQQARARIGMRLTSQVRGEIDRIEQLRSRPVLASTSWIVDSRAEELGRYIARSAELAGRVVERGMQQTSELSRQLRTLSPQHVLDRGYAIVQTADGSALRAPADAPDGTGLVLRLAAGALGATSTGPTDDIPSSAARLPASPAPDARPASGPES</sequence>
<accession>B0RH22</accession>
<proteinExistence type="inferred from homology"/>
<comment type="function">
    <text evidence="1">Bidirectionally degrades single-stranded DNA into large acid-insoluble oligonucleotides, which are then degraded further into small acid-soluble oligonucleotides.</text>
</comment>
<comment type="catalytic activity">
    <reaction evidence="1">
        <text>Exonucleolytic cleavage in either 5'- to 3'- or 3'- to 5'-direction to yield nucleoside 5'-phosphates.</text>
        <dbReference type="EC" id="3.1.11.6"/>
    </reaction>
</comment>
<comment type="subunit">
    <text evidence="1">Heterooligomer composed of large and small subunits.</text>
</comment>
<comment type="subcellular location">
    <subcellularLocation>
        <location evidence="1">Cytoplasm</location>
    </subcellularLocation>
</comment>
<comment type="similarity">
    <text evidence="1">Belongs to the XseA family.</text>
</comment>
<protein>
    <recommendedName>
        <fullName evidence="1">Exodeoxyribonuclease 7 large subunit</fullName>
        <ecNumber evidence="1">3.1.11.6</ecNumber>
    </recommendedName>
    <alternativeName>
        <fullName evidence="1">Exodeoxyribonuclease VII large subunit</fullName>
        <shortName evidence="1">Exonuclease VII large subunit</shortName>
    </alternativeName>
</protein>
<feature type="chain" id="PRO_1000079979" description="Exodeoxyribonuclease 7 large subunit">
    <location>
        <begin position="1"/>
        <end position="438"/>
    </location>
</feature>
<feature type="region of interest" description="Disordered" evidence="2">
    <location>
        <begin position="406"/>
        <end position="438"/>
    </location>
</feature>
<dbReference type="EC" id="3.1.11.6" evidence="1"/>
<dbReference type="EMBL" id="AM849034">
    <property type="protein sequence ID" value="CAQ02498.1"/>
    <property type="molecule type" value="Genomic_DNA"/>
</dbReference>
<dbReference type="RefSeq" id="WP_012299687.1">
    <property type="nucleotide sequence ID" value="NZ_MZMN01000003.1"/>
</dbReference>
<dbReference type="SMR" id="B0RH22"/>
<dbReference type="STRING" id="31964.CMS2416"/>
<dbReference type="KEGG" id="cms:CMS2416"/>
<dbReference type="eggNOG" id="COG1570">
    <property type="taxonomic scope" value="Bacteria"/>
</dbReference>
<dbReference type="HOGENOM" id="CLU_023625_2_1_11"/>
<dbReference type="OrthoDB" id="9802795at2"/>
<dbReference type="Proteomes" id="UP000001318">
    <property type="component" value="Chromosome"/>
</dbReference>
<dbReference type="GO" id="GO:0005737">
    <property type="term" value="C:cytoplasm"/>
    <property type="evidence" value="ECO:0007669"/>
    <property type="project" value="UniProtKB-SubCell"/>
</dbReference>
<dbReference type="GO" id="GO:0009318">
    <property type="term" value="C:exodeoxyribonuclease VII complex"/>
    <property type="evidence" value="ECO:0007669"/>
    <property type="project" value="InterPro"/>
</dbReference>
<dbReference type="GO" id="GO:0008855">
    <property type="term" value="F:exodeoxyribonuclease VII activity"/>
    <property type="evidence" value="ECO:0007669"/>
    <property type="project" value="UniProtKB-UniRule"/>
</dbReference>
<dbReference type="GO" id="GO:0003676">
    <property type="term" value="F:nucleic acid binding"/>
    <property type="evidence" value="ECO:0007669"/>
    <property type="project" value="InterPro"/>
</dbReference>
<dbReference type="GO" id="GO:0006308">
    <property type="term" value="P:DNA catabolic process"/>
    <property type="evidence" value="ECO:0007669"/>
    <property type="project" value="UniProtKB-UniRule"/>
</dbReference>
<dbReference type="CDD" id="cd04489">
    <property type="entry name" value="ExoVII_LU_OBF"/>
    <property type="match status" value="1"/>
</dbReference>
<dbReference type="HAMAP" id="MF_00378">
    <property type="entry name" value="Exonuc_7_L"/>
    <property type="match status" value="1"/>
</dbReference>
<dbReference type="InterPro" id="IPR003753">
    <property type="entry name" value="Exonuc_VII_L"/>
</dbReference>
<dbReference type="InterPro" id="IPR020579">
    <property type="entry name" value="Exonuc_VII_lsu_C"/>
</dbReference>
<dbReference type="InterPro" id="IPR025824">
    <property type="entry name" value="OB-fold_nuc-bd_dom"/>
</dbReference>
<dbReference type="NCBIfam" id="TIGR00237">
    <property type="entry name" value="xseA"/>
    <property type="match status" value="1"/>
</dbReference>
<dbReference type="PANTHER" id="PTHR30008">
    <property type="entry name" value="EXODEOXYRIBONUCLEASE 7 LARGE SUBUNIT"/>
    <property type="match status" value="1"/>
</dbReference>
<dbReference type="PANTHER" id="PTHR30008:SF0">
    <property type="entry name" value="EXODEOXYRIBONUCLEASE 7 LARGE SUBUNIT"/>
    <property type="match status" value="1"/>
</dbReference>
<dbReference type="Pfam" id="PF02601">
    <property type="entry name" value="Exonuc_VII_L"/>
    <property type="match status" value="1"/>
</dbReference>
<dbReference type="Pfam" id="PF13742">
    <property type="entry name" value="tRNA_anti_2"/>
    <property type="match status" value="1"/>
</dbReference>